<comment type="function">
    <text evidence="1">Catalyzes the attachment of glutamate to tRNA(Glu) in a two-step reaction: glutamate is first activated by ATP to form Glu-AMP and then transferred to the acceptor end of tRNA(Glu).</text>
</comment>
<comment type="catalytic activity">
    <reaction evidence="1">
        <text>tRNA(Glu) + L-glutamate + ATP = L-glutamyl-tRNA(Glu) + AMP + diphosphate</text>
        <dbReference type="Rhea" id="RHEA:23540"/>
        <dbReference type="Rhea" id="RHEA-COMP:9663"/>
        <dbReference type="Rhea" id="RHEA-COMP:9680"/>
        <dbReference type="ChEBI" id="CHEBI:29985"/>
        <dbReference type="ChEBI" id="CHEBI:30616"/>
        <dbReference type="ChEBI" id="CHEBI:33019"/>
        <dbReference type="ChEBI" id="CHEBI:78442"/>
        <dbReference type="ChEBI" id="CHEBI:78520"/>
        <dbReference type="ChEBI" id="CHEBI:456215"/>
        <dbReference type="EC" id="6.1.1.17"/>
    </reaction>
</comment>
<comment type="subcellular location">
    <subcellularLocation>
        <location evidence="1">Cytoplasm</location>
    </subcellularLocation>
</comment>
<comment type="similarity">
    <text evidence="1">Belongs to the class-I aminoacyl-tRNA synthetase family. Glutamate--tRNA ligase type 2 subfamily.</text>
</comment>
<comment type="sequence caution" evidence="2">
    <conflict type="erroneous initiation">
        <sequence resource="EMBL-CDS" id="AAL81877"/>
    </conflict>
</comment>
<dbReference type="EC" id="6.1.1.17" evidence="1"/>
<dbReference type="EMBL" id="AE009950">
    <property type="protein sequence ID" value="AAL81877.1"/>
    <property type="status" value="ALT_INIT"/>
    <property type="molecule type" value="Genomic_DNA"/>
</dbReference>
<dbReference type="RefSeq" id="WP_014835573.1">
    <property type="nucleotide sequence ID" value="NZ_CP023154.1"/>
</dbReference>
<dbReference type="SMR" id="Q8U064"/>
<dbReference type="STRING" id="186497.PF1753"/>
<dbReference type="PaxDb" id="186497-PF1753"/>
<dbReference type="KEGG" id="pfu:PF1753"/>
<dbReference type="PATRIC" id="fig|186497.12.peg.1822"/>
<dbReference type="eggNOG" id="arCOG04302">
    <property type="taxonomic scope" value="Archaea"/>
</dbReference>
<dbReference type="HOGENOM" id="CLU_001882_1_3_2"/>
<dbReference type="OrthoDB" id="10470at2157"/>
<dbReference type="PhylomeDB" id="Q8U064"/>
<dbReference type="Proteomes" id="UP000001013">
    <property type="component" value="Chromosome"/>
</dbReference>
<dbReference type="GO" id="GO:0005829">
    <property type="term" value="C:cytosol"/>
    <property type="evidence" value="ECO:0007669"/>
    <property type="project" value="TreeGrafter"/>
</dbReference>
<dbReference type="GO" id="GO:0005524">
    <property type="term" value="F:ATP binding"/>
    <property type="evidence" value="ECO:0007669"/>
    <property type="project" value="UniProtKB-UniRule"/>
</dbReference>
<dbReference type="GO" id="GO:0004818">
    <property type="term" value="F:glutamate-tRNA ligase activity"/>
    <property type="evidence" value="ECO:0007669"/>
    <property type="project" value="UniProtKB-UniRule"/>
</dbReference>
<dbReference type="GO" id="GO:0043604">
    <property type="term" value="P:amide biosynthetic process"/>
    <property type="evidence" value="ECO:0007669"/>
    <property type="project" value="TreeGrafter"/>
</dbReference>
<dbReference type="GO" id="GO:0006424">
    <property type="term" value="P:glutamyl-tRNA aminoacylation"/>
    <property type="evidence" value="ECO:0007669"/>
    <property type="project" value="UniProtKB-UniRule"/>
</dbReference>
<dbReference type="CDD" id="cd09287">
    <property type="entry name" value="GluRS_non_core"/>
    <property type="match status" value="1"/>
</dbReference>
<dbReference type="FunFam" id="2.40.240.10:FF:000033">
    <property type="entry name" value="Glutamate--tRNA ligase"/>
    <property type="match status" value="1"/>
</dbReference>
<dbReference type="FunFam" id="3.40.50.620:FF:000222">
    <property type="entry name" value="Glutamate--tRNA ligase"/>
    <property type="match status" value="1"/>
</dbReference>
<dbReference type="Gene3D" id="2.40.240.100">
    <property type="match status" value="1"/>
</dbReference>
<dbReference type="Gene3D" id="3.40.50.620">
    <property type="entry name" value="HUPs"/>
    <property type="match status" value="1"/>
</dbReference>
<dbReference type="Gene3D" id="2.40.240.10">
    <property type="entry name" value="Ribosomal Protein L25, Chain P"/>
    <property type="match status" value="1"/>
</dbReference>
<dbReference type="HAMAP" id="MF_02076">
    <property type="entry name" value="Glu_tRNA_synth_type2"/>
    <property type="match status" value="1"/>
</dbReference>
<dbReference type="InterPro" id="IPR050132">
    <property type="entry name" value="Gln/Glu-tRNA_Ligase"/>
</dbReference>
<dbReference type="InterPro" id="IPR004526">
    <property type="entry name" value="Glu-tRNA-synth_arc/euk"/>
</dbReference>
<dbReference type="InterPro" id="IPR000924">
    <property type="entry name" value="Glu/Gln-tRNA-synth"/>
</dbReference>
<dbReference type="InterPro" id="IPR020058">
    <property type="entry name" value="Glu/Gln-tRNA-synth_Ib_cat-dom"/>
</dbReference>
<dbReference type="InterPro" id="IPR020059">
    <property type="entry name" value="Glu/Gln-tRNA-synth_Ib_codon-bd"/>
</dbReference>
<dbReference type="InterPro" id="IPR020056">
    <property type="entry name" value="Rbsml_bL25/Gln-tRNA_synth_N"/>
</dbReference>
<dbReference type="InterPro" id="IPR011035">
    <property type="entry name" value="Ribosomal_bL25/Gln-tRNA_synth"/>
</dbReference>
<dbReference type="InterPro" id="IPR014729">
    <property type="entry name" value="Rossmann-like_a/b/a_fold"/>
</dbReference>
<dbReference type="InterPro" id="IPR049437">
    <property type="entry name" value="tRNA-synt_1c_C2"/>
</dbReference>
<dbReference type="NCBIfam" id="TIGR00463">
    <property type="entry name" value="gltX_arch"/>
    <property type="match status" value="1"/>
</dbReference>
<dbReference type="NCBIfam" id="NF003169">
    <property type="entry name" value="PRK04156.1"/>
    <property type="match status" value="1"/>
</dbReference>
<dbReference type="PANTHER" id="PTHR43097:SF5">
    <property type="entry name" value="GLUTAMATE--TRNA LIGASE"/>
    <property type="match status" value="1"/>
</dbReference>
<dbReference type="PANTHER" id="PTHR43097">
    <property type="entry name" value="GLUTAMINE-TRNA LIGASE"/>
    <property type="match status" value="1"/>
</dbReference>
<dbReference type="Pfam" id="PF00749">
    <property type="entry name" value="tRNA-synt_1c"/>
    <property type="match status" value="1"/>
</dbReference>
<dbReference type="Pfam" id="PF03950">
    <property type="entry name" value="tRNA-synt_1c_C"/>
    <property type="match status" value="1"/>
</dbReference>
<dbReference type="Pfam" id="PF20974">
    <property type="entry name" value="tRNA-synt_1c_C2"/>
    <property type="match status" value="1"/>
</dbReference>
<dbReference type="PRINTS" id="PR00987">
    <property type="entry name" value="TRNASYNTHGLU"/>
</dbReference>
<dbReference type="SUPFAM" id="SSF52374">
    <property type="entry name" value="Nucleotidylyl transferase"/>
    <property type="match status" value="1"/>
</dbReference>
<dbReference type="SUPFAM" id="SSF50715">
    <property type="entry name" value="Ribosomal protein L25-like"/>
    <property type="match status" value="1"/>
</dbReference>
<keyword id="KW-0030">Aminoacyl-tRNA synthetase</keyword>
<keyword id="KW-0067">ATP-binding</keyword>
<keyword id="KW-0963">Cytoplasm</keyword>
<keyword id="KW-0436">Ligase</keyword>
<keyword id="KW-0547">Nucleotide-binding</keyword>
<keyword id="KW-0648">Protein biosynthesis</keyword>
<keyword id="KW-1185">Reference proteome</keyword>
<protein>
    <recommendedName>
        <fullName evidence="1">Glutamate--tRNA ligase</fullName>
        <ecNumber evidence="1">6.1.1.17</ecNumber>
    </recommendedName>
    <alternativeName>
        <fullName evidence="1">Glutamyl-tRNA synthetase</fullName>
        <shortName evidence="1">GluRS</shortName>
    </alternativeName>
</protein>
<reference key="1">
    <citation type="journal article" date="1999" name="Genetics">
        <title>Divergence of the hyperthermophilic archaea Pyrococcus furiosus and P. horikoshii inferred from complete genomic sequences.</title>
        <authorList>
            <person name="Maeder D.L."/>
            <person name="Weiss R.B."/>
            <person name="Dunn D.M."/>
            <person name="Cherry J.L."/>
            <person name="Gonzalez J.M."/>
            <person name="DiRuggiero J."/>
            <person name="Robb F.T."/>
        </authorList>
    </citation>
    <scope>NUCLEOTIDE SEQUENCE [LARGE SCALE GENOMIC DNA]</scope>
    <source>
        <strain>ATCC 43587 / DSM 3638 / JCM 8422 / Vc1</strain>
    </source>
</reference>
<organism>
    <name type="scientific">Pyrococcus furiosus (strain ATCC 43587 / DSM 3638 / JCM 8422 / Vc1)</name>
    <dbReference type="NCBI Taxonomy" id="186497"/>
    <lineage>
        <taxon>Archaea</taxon>
        <taxon>Methanobacteriati</taxon>
        <taxon>Methanobacteriota</taxon>
        <taxon>Thermococci</taxon>
        <taxon>Thermococcales</taxon>
        <taxon>Thermococcaceae</taxon>
        <taxon>Pyrococcus</taxon>
    </lineage>
</organism>
<name>SYE_PYRFU</name>
<feature type="chain" id="PRO_0000119727" description="Glutamate--tRNA ligase">
    <location>
        <begin position="1"/>
        <end position="572"/>
    </location>
</feature>
<feature type="short sequence motif" description="'HIGH' region" evidence="1">
    <location>
        <begin position="107"/>
        <end position="117"/>
    </location>
</feature>
<gene>
    <name evidence="1" type="primary">gltX</name>
    <name type="ordered locus">PF1753</name>
</gene>
<proteinExistence type="inferred from homology"/>
<evidence type="ECO:0000255" key="1">
    <source>
        <dbReference type="HAMAP-Rule" id="MF_02076"/>
    </source>
</evidence>
<evidence type="ECO:0000305" key="2"/>
<sequence>MEVEKLALKYALINAIEHDGKANPKAVIGKILGENPELRKKAREIVPIVNKIVEEVNTLSLEEQKKKLEEIYPEYFMEGTKKEKEEKKQLPPLPKAEKGKVVTRFAPNPDGAFHLGNARAAILSYEYAKMYDGKFILRFDDTDPKVKRPELIFYDMIIEDLEWLGIKPDEIVYASDRLEIYYKYAEELIKMGKAYVCTCPPDEFRKLRDQGIACPHRDEPVEVQLERWKKMLNGEYREGEAVVRIKTDLNHPNPAVRDWPALRIVDEPNHPRTGNKYRVWPLYNFASAIDDHELGVTHIFRGQEHSENETRQRYIYEYFGWEYPVTVHHGRLSIEGVILSKSKTRKGIEEGKYLGWDDPRLGTIRALRRRGILPEAIRELILEVGLKKSDATVSWDNLAAINRKLVDPIANRYFFVADPIPMYIEEAEEFEAKIPLHPDHPERGYRVLKFEPGKPIYVSKDDLSLLKPGGFIRLKDLFNVEILEVGDTIKARFHSHEYEVARKNKWRMIHWVPEGKECEVIIPEGEELIIRKGLLEKNANVKEGEIVQFERFGFVRIDKIENDKVIAIYAHK</sequence>
<accession>Q8U064</accession>